<dbReference type="EMBL" id="CU329670">
    <property type="protein sequence ID" value="CAA20143.1"/>
    <property type="molecule type" value="Genomic_DNA"/>
</dbReference>
<dbReference type="PIR" id="T41708">
    <property type="entry name" value="T41708"/>
</dbReference>
<dbReference type="RefSeq" id="NP_593965.1">
    <property type="nucleotide sequence ID" value="NM_001019392.2"/>
</dbReference>
<dbReference type="SMR" id="O14078"/>
<dbReference type="BioGRID" id="278964">
    <property type="interactions" value="1"/>
</dbReference>
<dbReference type="FunCoup" id="O14078">
    <property type="interactions" value="419"/>
</dbReference>
<dbReference type="STRING" id="284812.O14078"/>
<dbReference type="PaxDb" id="4896-SPACUNK4.13c.1"/>
<dbReference type="EnsemblFungi" id="SPACUNK4.13c.1">
    <property type="protein sequence ID" value="SPACUNK4.13c.1:pep"/>
    <property type="gene ID" value="SPACUNK4.13c"/>
</dbReference>
<dbReference type="KEGG" id="spo:2542506"/>
<dbReference type="PomBase" id="SPACUNK4.13c"/>
<dbReference type="VEuPathDB" id="FungiDB:SPACUNK4.13c"/>
<dbReference type="eggNOG" id="KOG1491">
    <property type="taxonomic scope" value="Eukaryota"/>
</dbReference>
<dbReference type="HOGENOM" id="CLU_018395_1_2_1"/>
<dbReference type="InParanoid" id="O14078"/>
<dbReference type="OMA" id="VYLVNMD"/>
<dbReference type="PhylomeDB" id="O14078"/>
<dbReference type="PRO" id="PR:O14078"/>
<dbReference type="Proteomes" id="UP000002485">
    <property type="component" value="Chromosome I"/>
</dbReference>
<dbReference type="GO" id="GO:0005737">
    <property type="term" value="C:cytoplasm"/>
    <property type="evidence" value="ECO:0000318"/>
    <property type="project" value="GO_Central"/>
</dbReference>
<dbReference type="GO" id="GO:0005739">
    <property type="term" value="C:mitochondrion"/>
    <property type="evidence" value="ECO:0000266"/>
    <property type="project" value="PomBase"/>
</dbReference>
<dbReference type="GO" id="GO:0005524">
    <property type="term" value="F:ATP binding"/>
    <property type="evidence" value="ECO:0007669"/>
    <property type="project" value="UniProtKB-KW"/>
</dbReference>
<dbReference type="GO" id="GO:0016887">
    <property type="term" value="F:ATP hydrolysis activity"/>
    <property type="evidence" value="ECO:0000318"/>
    <property type="project" value="GO_Central"/>
</dbReference>
<dbReference type="GO" id="GO:0005525">
    <property type="term" value="F:GTP binding"/>
    <property type="evidence" value="ECO:0007669"/>
    <property type="project" value="UniProtKB-KW"/>
</dbReference>
<dbReference type="CDD" id="cd04867">
    <property type="entry name" value="TGS_YchF_OLA1"/>
    <property type="match status" value="1"/>
</dbReference>
<dbReference type="CDD" id="cd01900">
    <property type="entry name" value="YchF"/>
    <property type="match status" value="1"/>
</dbReference>
<dbReference type="FunFam" id="1.10.150.300:FF:000001">
    <property type="entry name" value="Ribosome-binding ATPase YchF"/>
    <property type="match status" value="1"/>
</dbReference>
<dbReference type="FunFam" id="3.10.20.30:FF:000001">
    <property type="entry name" value="Ribosome-binding ATPase YchF"/>
    <property type="match status" value="1"/>
</dbReference>
<dbReference type="Gene3D" id="3.10.20.30">
    <property type="match status" value="1"/>
</dbReference>
<dbReference type="Gene3D" id="3.40.50.300">
    <property type="entry name" value="P-loop containing nucleotide triphosphate hydrolases"/>
    <property type="match status" value="1"/>
</dbReference>
<dbReference type="Gene3D" id="1.10.150.300">
    <property type="entry name" value="TGS-like domain"/>
    <property type="match status" value="1"/>
</dbReference>
<dbReference type="InterPro" id="IPR004396">
    <property type="entry name" value="ATPase_YchF/OLA1"/>
</dbReference>
<dbReference type="InterPro" id="IPR012675">
    <property type="entry name" value="Beta-grasp_dom_sf"/>
</dbReference>
<dbReference type="InterPro" id="IPR031167">
    <property type="entry name" value="G_OBG"/>
</dbReference>
<dbReference type="InterPro" id="IPR006073">
    <property type="entry name" value="GTP-bd"/>
</dbReference>
<dbReference type="InterPro" id="IPR027417">
    <property type="entry name" value="P-loop_NTPase"/>
</dbReference>
<dbReference type="InterPro" id="IPR004095">
    <property type="entry name" value="TGS"/>
</dbReference>
<dbReference type="InterPro" id="IPR012676">
    <property type="entry name" value="TGS-like"/>
</dbReference>
<dbReference type="InterPro" id="IPR023192">
    <property type="entry name" value="TGS-like_dom_sf"/>
</dbReference>
<dbReference type="InterPro" id="IPR013029">
    <property type="entry name" value="YchF_C"/>
</dbReference>
<dbReference type="InterPro" id="IPR041706">
    <property type="entry name" value="YchF_N"/>
</dbReference>
<dbReference type="NCBIfam" id="TIGR00092">
    <property type="entry name" value="redox-regulated ATPase YchF"/>
    <property type="match status" value="1"/>
</dbReference>
<dbReference type="PANTHER" id="PTHR23305">
    <property type="entry name" value="OBG GTPASE FAMILY"/>
    <property type="match status" value="1"/>
</dbReference>
<dbReference type="PANTHER" id="PTHR23305:SF11">
    <property type="entry name" value="OBG-LIKE ATPASE 1"/>
    <property type="match status" value="1"/>
</dbReference>
<dbReference type="Pfam" id="PF01926">
    <property type="entry name" value="MMR_HSR1"/>
    <property type="match status" value="1"/>
</dbReference>
<dbReference type="Pfam" id="PF06071">
    <property type="entry name" value="YchF-GTPase_C"/>
    <property type="match status" value="1"/>
</dbReference>
<dbReference type="PIRSF" id="PIRSF006641">
    <property type="entry name" value="CHP00092"/>
    <property type="match status" value="1"/>
</dbReference>
<dbReference type="PRINTS" id="PR00326">
    <property type="entry name" value="GTP1OBG"/>
</dbReference>
<dbReference type="SUPFAM" id="SSF52540">
    <property type="entry name" value="P-loop containing nucleoside triphosphate hydrolases"/>
    <property type="match status" value="1"/>
</dbReference>
<dbReference type="SUPFAM" id="SSF81271">
    <property type="entry name" value="TGS-like"/>
    <property type="match status" value="1"/>
</dbReference>
<dbReference type="PROSITE" id="PS51710">
    <property type="entry name" value="G_OBG"/>
    <property type="match status" value="1"/>
</dbReference>
<dbReference type="PROSITE" id="PS51880">
    <property type="entry name" value="TGS"/>
    <property type="match status" value="1"/>
</dbReference>
<organism>
    <name type="scientific">Schizosaccharomyces pombe (strain 972 / ATCC 24843)</name>
    <name type="common">Fission yeast</name>
    <dbReference type="NCBI Taxonomy" id="284812"/>
    <lineage>
        <taxon>Eukaryota</taxon>
        <taxon>Fungi</taxon>
        <taxon>Dikarya</taxon>
        <taxon>Ascomycota</taxon>
        <taxon>Taphrinomycotina</taxon>
        <taxon>Schizosaccharomycetes</taxon>
        <taxon>Schizosaccharomycetales</taxon>
        <taxon>Schizosaccharomycetaceae</taxon>
        <taxon>Schizosaccharomyces</taxon>
    </lineage>
</organism>
<accession>O14078</accession>
<protein>
    <recommendedName>
        <fullName>Obg-like ATPase homolog</fullName>
        <shortName>OLA1 homolog</shortName>
    </recommendedName>
</protein>
<sequence>MRGIVTRIVLSTQKCLPSVNCTRRYYSKQKDISIVRQRLGRPGNHLKIGIVGMPNIGKSTLFQILTKTNLGNPANYPFATIDPVHAKAPVLDSQYELLCEIYQPKTRIPAQLTIYDTAGLTRNSSKGEGLGNAFLSNIRSVDALFQLVRAFPEAQVPHVEKSVDPVRDLQIIQEELLLKDAEFLESYLKKEGRSPKTCAKALDTARRALEVVLGKGRQISKAEWNDEQIPILNSLNLLTAKPVVYLVNMDQDDYLSDEQEALKGIKEWVEKNSFGDQVIPLSVLFEEQLFMLTPEEAAQECASLGKNSQLSEIICAGYSALNLIHYFTASEKIVQAWTIADGSKAPDAAGIIHSDFKKKFVAGEVIKFSDFEKYKSVDACKSVGKCKTKGKDYTVEPGDIIFWKIAR</sequence>
<gene>
    <name type="ORF">SPAC2E11.13c</name>
    <name type="ORF">SPACUNK4.13c</name>
</gene>
<keyword id="KW-0067">ATP-binding</keyword>
<keyword id="KW-0342">GTP-binding</keyword>
<keyword id="KW-0547">Nucleotide-binding</keyword>
<keyword id="KW-1185">Reference proteome</keyword>
<reference key="1">
    <citation type="journal article" date="2002" name="Nature">
        <title>The genome sequence of Schizosaccharomyces pombe.</title>
        <authorList>
            <person name="Wood V."/>
            <person name="Gwilliam R."/>
            <person name="Rajandream M.A."/>
            <person name="Lyne M.H."/>
            <person name="Lyne R."/>
            <person name="Stewart A."/>
            <person name="Sgouros J.G."/>
            <person name="Peat N."/>
            <person name="Hayles J."/>
            <person name="Baker S.G."/>
            <person name="Basham D."/>
            <person name="Bowman S."/>
            <person name="Brooks K."/>
            <person name="Brown D."/>
            <person name="Brown S."/>
            <person name="Chillingworth T."/>
            <person name="Churcher C.M."/>
            <person name="Collins M."/>
            <person name="Connor R."/>
            <person name="Cronin A."/>
            <person name="Davis P."/>
            <person name="Feltwell T."/>
            <person name="Fraser A."/>
            <person name="Gentles S."/>
            <person name="Goble A."/>
            <person name="Hamlin N."/>
            <person name="Harris D.E."/>
            <person name="Hidalgo J."/>
            <person name="Hodgson G."/>
            <person name="Holroyd S."/>
            <person name="Hornsby T."/>
            <person name="Howarth S."/>
            <person name="Huckle E.J."/>
            <person name="Hunt S."/>
            <person name="Jagels K."/>
            <person name="James K.D."/>
            <person name="Jones L."/>
            <person name="Jones M."/>
            <person name="Leather S."/>
            <person name="McDonald S."/>
            <person name="McLean J."/>
            <person name="Mooney P."/>
            <person name="Moule S."/>
            <person name="Mungall K.L."/>
            <person name="Murphy L.D."/>
            <person name="Niblett D."/>
            <person name="Odell C."/>
            <person name="Oliver K."/>
            <person name="O'Neil S."/>
            <person name="Pearson D."/>
            <person name="Quail M.A."/>
            <person name="Rabbinowitsch E."/>
            <person name="Rutherford K.M."/>
            <person name="Rutter S."/>
            <person name="Saunders D."/>
            <person name="Seeger K."/>
            <person name="Sharp S."/>
            <person name="Skelton J."/>
            <person name="Simmonds M.N."/>
            <person name="Squares R."/>
            <person name="Squares S."/>
            <person name="Stevens K."/>
            <person name="Taylor K."/>
            <person name="Taylor R.G."/>
            <person name="Tivey A."/>
            <person name="Walsh S.V."/>
            <person name="Warren T."/>
            <person name="Whitehead S."/>
            <person name="Woodward J.R."/>
            <person name="Volckaert G."/>
            <person name="Aert R."/>
            <person name="Robben J."/>
            <person name="Grymonprez B."/>
            <person name="Weltjens I."/>
            <person name="Vanstreels E."/>
            <person name="Rieger M."/>
            <person name="Schaefer M."/>
            <person name="Mueller-Auer S."/>
            <person name="Gabel C."/>
            <person name="Fuchs M."/>
            <person name="Duesterhoeft A."/>
            <person name="Fritzc C."/>
            <person name="Holzer E."/>
            <person name="Moestl D."/>
            <person name="Hilbert H."/>
            <person name="Borzym K."/>
            <person name="Langer I."/>
            <person name="Beck A."/>
            <person name="Lehrach H."/>
            <person name="Reinhardt R."/>
            <person name="Pohl T.M."/>
            <person name="Eger P."/>
            <person name="Zimmermann W."/>
            <person name="Wedler H."/>
            <person name="Wambutt R."/>
            <person name="Purnelle B."/>
            <person name="Goffeau A."/>
            <person name="Cadieu E."/>
            <person name="Dreano S."/>
            <person name="Gloux S."/>
            <person name="Lelaure V."/>
            <person name="Mottier S."/>
            <person name="Galibert F."/>
            <person name="Aves S.J."/>
            <person name="Xiang Z."/>
            <person name="Hunt C."/>
            <person name="Moore K."/>
            <person name="Hurst S.M."/>
            <person name="Lucas M."/>
            <person name="Rochet M."/>
            <person name="Gaillardin C."/>
            <person name="Tallada V.A."/>
            <person name="Garzon A."/>
            <person name="Thode G."/>
            <person name="Daga R.R."/>
            <person name="Cruzado L."/>
            <person name="Jimenez J."/>
            <person name="Sanchez M."/>
            <person name="del Rey F."/>
            <person name="Benito J."/>
            <person name="Dominguez A."/>
            <person name="Revuelta J.L."/>
            <person name="Moreno S."/>
            <person name="Armstrong J."/>
            <person name="Forsburg S.L."/>
            <person name="Cerutti L."/>
            <person name="Lowe T."/>
            <person name="McCombie W.R."/>
            <person name="Paulsen I."/>
            <person name="Potashkin J."/>
            <person name="Shpakovski G.V."/>
            <person name="Ussery D."/>
            <person name="Barrell B.G."/>
            <person name="Nurse P."/>
        </authorList>
    </citation>
    <scope>NUCLEOTIDE SEQUENCE [LARGE SCALE GENOMIC DNA]</scope>
    <source>
        <strain>972 / ATCC 24843</strain>
    </source>
</reference>
<name>YEAD_SCHPO</name>
<feature type="chain" id="PRO_0000122461" description="Obg-like ATPase homolog">
    <location>
        <begin position="1"/>
        <end position="407"/>
    </location>
</feature>
<feature type="domain" description="OBG-type G" evidence="2">
    <location>
        <begin position="46"/>
        <end position="301"/>
    </location>
</feature>
<feature type="domain" description="TGS" evidence="3">
    <location>
        <begin position="322"/>
        <end position="405"/>
    </location>
</feature>
<feature type="binding site" evidence="2">
    <location>
        <begin position="55"/>
        <end position="60"/>
    </location>
    <ligand>
        <name>ATP</name>
        <dbReference type="ChEBI" id="CHEBI:30616"/>
    </ligand>
</feature>
<feature type="binding site" evidence="1">
    <location>
        <position position="249"/>
    </location>
    <ligand>
        <name>ATP</name>
        <dbReference type="ChEBI" id="CHEBI:30616"/>
    </ligand>
</feature>
<evidence type="ECO:0000250" key="1"/>
<evidence type="ECO:0000255" key="2">
    <source>
        <dbReference type="PROSITE-ProRule" id="PRU01047"/>
    </source>
</evidence>
<evidence type="ECO:0000255" key="3">
    <source>
        <dbReference type="PROSITE-ProRule" id="PRU01228"/>
    </source>
</evidence>
<proteinExistence type="inferred from homology"/>
<comment type="function">
    <text evidence="1">Hydrolyzes ATP, and can also hydrolyze GTP with lower efficiency. Has lower affinity for GTP (By similarity).</text>
</comment>
<comment type="similarity">
    <text evidence="2">Belongs to the TRAFAC class OBG-HflX-like GTPase superfamily. OBG GTPase family.</text>
</comment>